<evidence type="ECO:0000250" key="1"/>
<evidence type="ECO:0000255" key="2">
    <source>
        <dbReference type="PROSITE-ProRule" id="PRU01182"/>
    </source>
</evidence>
<evidence type="ECO:0000256" key="3">
    <source>
        <dbReference type="SAM" id="MobiDB-lite"/>
    </source>
</evidence>
<evidence type="ECO:0000305" key="4"/>
<dbReference type="EMBL" id="AL670002">
    <property type="protein sequence ID" value="CAD21233.1"/>
    <property type="molecule type" value="Genomic_DNA"/>
</dbReference>
<dbReference type="EMBL" id="CM002237">
    <property type="protein sequence ID" value="EAA27014.1"/>
    <property type="molecule type" value="Genomic_DNA"/>
</dbReference>
<dbReference type="RefSeq" id="XP_956250.1">
    <property type="nucleotide sequence ID" value="XM_951157.3"/>
</dbReference>
<dbReference type="SMR" id="Q8WZY4"/>
<dbReference type="FunCoup" id="Q8WZY4">
    <property type="interactions" value="1051"/>
</dbReference>
<dbReference type="STRING" id="367110.Q8WZY4"/>
<dbReference type="MEROPS" id="M67.973"/>
<dbReference type="PaxDb" id="5141-EFNCRP00000001798"/>
<dbReference type="EnsemblFungi" id="EAA27014">
    <property type="protein sequence ID" value="EAA27014"/>
    <property type="gene ID" value="NCU01547"/>
</dbReference>
<dbReference type="GeneID" id="3872410"/>
<dbReference type="KEGG" id="ncr:NCU01547"/>
<dbReference type="VEuPathDB" id="FungiDB:NCU01547"/>
<dbReference type="HOGENOM" id="CLU_027018_3_0_1"/>
<dbReference type="InParanoid" id="Q8WZY4"/>
<dbReference type="OrthoDB" id="10256771at2759"/>
<dbReference type="Proteomes" id="UP000001805">
    <property type="component" value="Chromosome 6, Linkage Group II"/>
</dbReference>
<dbReference type="GO" id="GO:1990023">
    <property type="term" value="C:mitotic spindle midzone"/>
    <property type="evidence" value="ECO:0007669"/>
    <property type="project" value="EnsemblFungi"/>
</dbReference>
<dbReference type="GO" id="GO:0000502">
    <property type="term" value="C:proteasome complex"/>
    <property type="evidence" value="ECO:0000318"/>
    <property type="project" value="GO_Central"/>
</dbReference>
<dbReference type="GO" id="GO:0008541">
    <property type="term" value="C:proteasome regulatory particle, lid subcomplex"/>
    <property type="evidence" value="ECO:0007669"/>
    <property type="project" value="EnsemblFungi"/>
</dbReference>
<dbReference type="GO" id="GO:0034515">
    <property type="term" value="C:proteasome storage granule"/>
    <property type="evidence" value="ECO:0007669"/>
    <property type="project" value="EnsemblFungi"/>
</dbReference>
<dbReference type="GO" id="GO:0008237">
    <property type="term" value="F:metallopeptidase activity"/>
    <property type="evidence" value="ECO:0007669"/>
    <property type="project" value="InterPro"/>
</dbReference>
<dbReference type="GO" id="GO:0043161">
    <property type="term" value="P:proteasome-mediated ubiquitin-dependent protein catabolic process"/>
    <property type="evidence" value="ECO:0000318"/>
    <property type="project" value="GO_Central"/>
</dbReference>
<dbReference type="CDD" id="cd08062">
    <property type="entry name" value="MPN_RPN7_8"/>
    <property type="match status" value="1"/>
</dbReference>
<dbReference type="FunFam" id="3.40.140.10:FF:000004">
    <property type="entry name" value="26S proteasome regulatory subunit rpn-8"/>
    <property type="match status" value="1"/>
</dbReference>
<dbReference type="Gene3D" id="3.40.140.10">
    <property type="entry name" value="Cytidine Deaminase, domain 2"/>
    <property type="match status" value="1"/>
</dbReference>
<dbReference type="InterPro" id="IPR024969">
    <property type="entry name" value="EIF3F/CSN6-like_C"/>
</dbReference>
<dbReference type="InterPro" id="IPR000555">
    <property type="entry name" value="JAMM/MPN+_dom"/>
</dbReference>
<dbReference type="InterPro" id="IPR037518">
    <property type="entry name" value="MPN"/>
</dbReference>
<dbReference type="InterPro" id="IPR033858">
    <property type="entry name" value="MPN_RPN7_8"/>
</dbReference>
<dbReference type="PANTHER" id="PTHR10540:SF7">
    <property type="entry name" value="26S PROTEASOME NON-ATPASE REGULATORY SUBUNIT 7"/>
    <property type="match status" value="1"/>
</dbReference>
<dbReference type="PANTHER" id="PTHR10540">
    <property type="entry name" value="EUKARYOTIC TRANSLATION INITIATION FACTOR 3 SUBUNIT F-RELATED"/>
    <property type="match status" value="1"/>
</dbReference>
<dbReference type="Pfam" id="PF01398">
    <property type="entry name" value="JAB"/>
    <property type="match status" value="1"/>
</dbReference>
<dbReference type="Pfam" id="PF13012">
    <property type="entry name" value="MitMem_reg"/>
    <property type="match status" value="1"/>
</dbReference>
<dbReference type="SMART" id="SM00232">
    <property type="entry name" value="JAB_MPN"/>
    <property type="match status" value="1"/>
</dbReference>
<dbReference type="PROSITE" id="PS50249">
    <property type="entry name" value="MPN"/>
    <property type="match status" value="1"/>
</dbReference>
<name>RPN8_NEUCR</name>
<accession>Q8WZY4</accession>
<accession>Q1K4Y6</accession>
<proteinExistence type="inferred from homology"/>
<feature type="chain" id="PRO_0000213949" description="26S proteasome regulatory subunit rpn-8">
    <location>
        <begin position="1"/>
        <end position="352"/>
    </location>
</feature>
<feature type="domain" description="MPN" evidence="2">
    <location>
        <begin position="16"/>
        <end position="152"/>
    </location>
</feature>
<feature type="region of interest" description="Disordered" evidence="3">
    <location>
        <begin position="303"/>
        <end position="352"/>
    </location>
</feature>
<feature type="compositionally biased region" description="Basic and acidic residues" evidence="3">
    <location>
        <begin position="306"/>
        <end position="331"/>
    </location>
</feature>
<feature type="compositionally biased region" description="Basic and acidic residues" evidence="3">
    <location>
        <begin position="339"/>
        <end position="352"/>
    </location>
</feature>
<organism>
    <name type="scientific">Neurospora crassa (strain ATCC 24698 / 74-OR23-1A / CBS 708.71 / DSM 1257 / FGSC 987)</name>
    <dbReference type="NCBI Taxonomy" id="367110"/>
    <lineage>
        <taxon>Eukaryota</taxon>
        <taxon>Fungi</taxon>
        <taxon>Dikarya</taxon>
        <taxon>Ascomycota</taxon>
        <taxon>Pezizomycotina</taxon>
        <taxon>Sordariomycetes</taxon>
        <taxon>Sordariomycetidae</taxon>
        <taxon>Sordariales</taxon>
        <taxon>Sordariaceae</taxon>
        <taxon>Neurospora</taxon>
    </lineage>
</organism>
<protein>
    <recommendedName>
        <fullName>26S proteasome regulatory subunit rpn-8</fullName>
    </recommendedName>
</protein>
<reference key="1">
    <citation type="journal article" date="2003" name="Nucleic Acids Res.">
        <title>What's in the genome of a filamentous fungus? Analysis of the Neurospora genome sequence.</title>
        <authorList>
            <person name="Mannhaupt G."/>
            <person name="Montrone C."/>
            <person name="Haase D."/>
            <person name="Mewes H.-W."/>
            <person name="Aign V."/>
            <person name="Hoheisel J.D."/>
            <person name="Fartmann B."/>
            <person name="Nyakatura G."/>
            <person name="Kempken F."/>
            <person name="Maier J."/>
            <person name="Schulte U."/>
        </authorList>
    </citation>
    <scope>NUCLEOTIDE SEQUENCE [LARGE SCALE GENOMIC DNA]</scope>
    <source>
        <strain>ATCC 24698 / 74-OR23-1A / CBS 708.71 / DSM 1257 / FGSC 987</strain>
    </source>
</reference>
<reference key="2">
    <citation type="journal article" date="2003" name="Nature">
        <title>The genome sequence of the filamentous fungus Neurospora crassa.</title>
        <authorList>
            <person name="Galagan J.E."/>
            <person name="Calvo S.E."/>
            <person name="Borkovich K.A."/>
            <person name="Selker E.U."/>
            <person name="Read N.D."/>
            <person name="Jaffe D.B."/>
            <person name="FitzHugh W."/>
            <person name="Ma L.-J."/>
            <person name="Smirnov S."/>
            <person name="Purcell S."/>
            <person name="Rehman B."/>
            <person name="Elkins T."/>
            <person name="Engels R."/>
            <person name="Wang S."/>
            <person name="Nielsen C.B."/>
            <person name="Butler J."/>
            <person name="Endrizzi M."/>
            <person name="Qui D."/>
            <person name="Ianakiev P."/>
            <person name="Bell-Pedersen D."/>
            <person name="Nelson M.A."/>
            <person name="Werner-Washburne M."/>
            <person name="Selitrennikoff C.P."/>
            <person name="Kinsey J.A."/>
            <person name="Braun E.L."/>
            <person name="Zelter A."/>
            <person name="Schulte U."/>
            <person name="Kothe G.O."/>
            <person name="Jedd G."/>
            <person name="Mewes H.-W."/>
            <person name="Staben C."/>
            <person name="Marcotte E."/>
            <person name="Greenberg D."/>
            <person name="Roy A."/>
            <person name="Foley K."/>
            <person name="Naylor J."/>
            <person name="Stange-Thomann N."/>
            <person name="Barrett R."/>
            <person name="Gnerre S."/>
            <person name="Kamal M."/>
            <person name="Kamvysselis M."/>
            <person name="Mauceli E.W."/>
            <person name="Bielke C."/>
            <person name="Rudd S."/>
            <person name="Frishman D."/>
            <person name="Krystofova S."/>
            <person name="Rasmussen C."/>
            <person name="Metzenberg R.L."/>
            <person name="Perkins D.D."/>
            <person name="Kroken S."/>
            <person name="Cogoni C."/>
            <person name="Macino G."/>
            <person name="Catcheside D.E.A."/>
            <person name="Li W."/>
            <person name="Pratt R.J."/>
            <person name="Osmani S.A."/>
            <person name="DeSouza C.P.C."/>
            <person name="Glass N.L."/>
            <person name="Orbach M.J."/>
            <person name="Berglund J.A."/>
            <person name="Voelker R."/>
            <person name="Yarden O."/>
            <person name="Plamann M."/>
            <person name="Seiler S."/>
            <person name="Dunlap J.C."/>
            <person name="Radford A."/>
            <person name="Aramayo R."/>
            <person name="Natvig D.O."/>
            <person name="Alex L.A."/>
            <person name="Mannhaupt G."/>
            <person name="Ebbole D.J."/>
            <person name="Freitag M."/>
            <person name="Paulsen I."/>
            <person name="Sachs M.S."/>
            <person name="Lander E.S."/>
            <person name="Nusbaum C."/>
            <person name="Birren B.W."/>
        </authorList>
    </citation>
    <scope>NUCLEOTIDE SEQUENCE [LARGE SCALE GENOMIC DNA]</scope>
    <source>
        <strain>ATCC 24698 / 74-OR23-1A / CBS 708.71 / DSM 1257 / FGSC 987</strain>
    </source>
</reference>
<keyword id="KW-0647">Proteasome</keyword>
<keyword id="KW-1185">Reference proteome</keyword>
<gene>
    <name type="primary">rpn-8</name>
    <name type="ORF">B24G3.180</name>
    <name type="ORF">NCU01547</name>
</gene>
<sequence length="352" mass="39104">MPATTAETLSLVNRSVSVAPLVLLSVVDHYNRTQANKSKSKRVVGVLLGQNDGKNVRVSNSFAVPFEEDDKDPSVWFLDHNYVESMNDMFKKVNAREKLIGWYHSGPKLRASDLDINELFKRYTPNPLLVIVDVQPKETGVPTDAYFAVDEIKDDGTTTSKTFVHTPSIIEAEEAEEIGVEHLLRDIRDVAVGTLSTRITNQMRSLQGLHHRLRDIQAYLQKVLDGQLPVNHAILGNLQDVFNLLPNLSTPKSGPGATGTNADSELNHAMSIKTNDQLMAIYLSSLIRAITAFHDLIENKIQNRQQQEENDAKKKEGENGEKKEGADKKEGSPAAANGESKEKENSPKEKKK</sequence>
<comment type="function">
    <text evidence="1">Acts as a regulatory subunit of the 26S proteasome which is involved in the ATP-dependent degradation of ubiquitinated proteins.</text>
</comment>
<comment type="similarity">
    <text evidence="4">Belongs to the peptidase M67A family.</text>
</comment>